<protein>
    <recommendedName>
        <fullName evidence="1">Antiholin-like protein LrgA</fullName>
    </recommendedName>
</protein>
<name>LRGA_STAAB</name>
<proteinExistence type="inferred from homology"/>
<gene>
    <name evidence="1" type="primary">lrgA</name>
    <name type="ordered locus">SAB0201</name>
</gene>
<accession>Q2YV66</accession>
<feature type="chain" id="PRO_1000065438" description="Antiholin-like protein LrgA">
    <location>
        <begin position="1"/>
        <end position="147"/>
    </location>
</feature>
<feature type="transmembrane region" description="Helical" evidence="1">
    <location>
        <begin position="12"/>
        <end position="32"/>
    </location>
</feature>
<feature type="transmembrane region" description="Helical" evidence="1">
    <location>
        <begin position="35"/>
        <end position="55"/>
    </location>
</feature>
<feature type="transmembrane region" description="Helical" evidence="1">
    <location>
        <begin position="74"/>
        <end position="94"/>
    </location>
</feature>
<feature type="transmembrane region" description="Helical" evidence="1">
    <location>
        <begin position="98"/>
        <end position="118"/>
    </location>
</feature>
<comment type="function">
    <text evidence="1">Inhibits the expression or activity of extracellular murein hydrolases by interacting, possibly with LrgB, with the holin-like proteins CidA and/or CidB. The LrgAB and CidAB proteins may affect the proton motive force of the membrane. May be involved in programmed cell death (PCD), possibly triggering PCD in response to antibiotics and environmental stresses.</text>
</comment>
<comment type="subcellular location">
    <subcellularLocation>
        <location evidence="1">Cell membrane</location>
        <topology evidence="1">Multi-pass membrane protein</topology>
    </subcellularLocation>
</comment>
<comment type="similarity">
    <text evidence="1">Belongs to the CidA/LrgA family. LrgA subfamily.</text>
</comment>
<keyword id="KW-1003">Cell membrane</keyword>
<keyword id="KW-0204">Cytolysis</keyword>
<keyword id="KW-0472">Membrane</keyword>
<keyword id="KW-0812">Transmembrane</keyword>
<keyword id="KW-1133">Transmembrane helix</keyword>
<sequence length="147" mass="15780">MVVKQQKDASKPAHFFHQVIVIALVLFVSKIIESFMPIPMPASVIGLVLLFVLLCTGAVKLGEVEKVGTTLTNNIGLLFVPAGISVVNSLGVISQAPFLIIGLIIVSTILLLICTGYVTQIIMKVTSRSKGDKVTKKIKIEEAQAHD</sequence>
<organism>
    <name type="scientific">Staphylococcus aureus (strain bovine RF122 / ET3-1)</name>
    <dbReference type="NCBI Taxonomy" id="273036"/>
    <lineage>
        <taxon>Bacteria</taxon>
        <taxon>Bacillati</taxon>
        <taxon>Bacillota</taxon>
        <taxon>Bacilli</taxon>
        <taxon>Bacillales</taxon>
        <taxon>Staphylococcaceae</taxon>
        <taxon>Staphylococcus</taxon>
    </lineage>
</organism>
<reference key="1">
    <citation type="journal article" date="2007" name="PLoS ONE">
        <title>Molecular correlates of host specialization in Staphylococcus aureus.</title>
        <authorList>
            <person name="Herron-Olson L."/>
            <person name="Fitzgerald J.R."/>
            <person name="Musser J.M."/>
            <person name="Kapur V."/>
        </authorList>
    </citation>
    <scope>NUCLEOTIDE SEQUENCE [LARGE SCALE GENOMIC DNA]</scope>
    <source>
        <strain>bovine RF122 / ET3-1</strain>
    </source>
</reference>
<dbReference type="EMBL" id="AJ938182">
    <property type="protein sequence ID" value="CAI79889.1"/>
    <property type="molecule type" value="Genomic_DNA"/>
</dbReference>
<dbReference type="RefSeq" id="WP_001792906.1">
    <property type="nucleotide sequence ID" value="NC_007622.1"/>
</dbReference>
<dbReference type="SMR" id="Q2YV66"/>
<dbReference type="KEGG" id="sab:SAB0201"/>
<dbReference type="HOGENOM" id="CLU_113736_0_1_9"/>
<dbReference type="GO" id="GO:0005886">
    <property type="term" value="C:plasma membrane"/>
    <property type="evidence" value="ECO:0007669"/>
    <property type="project" value="UniProtKB-SubCell"/>
</dbReference>
<dbReference type="GO" id="GO:0019835">
    <property type="term" value="P:cytolysis"/>
    <property type="evidence" value="ECO:0007669"/>
    <property type="project" value="UniProtKB-UniRule"/>
</dbReference>
<dbReference type="GO" id="GO:0031640">
    <property type="term" value="P:killing of cells of another organism"/>
    <property type="evidence" value="ECO:0007669"/>
    <property type="project" value="UniProtKB-KW"/>
</dbReference>
<dbReference type="GO" id="GO:0012501">
    <property type="term" value="P:programmed cell death"/>
    <property type="evidence" value="ECO:0007669"/>
    <property type="project" value="UniProtKB-UniRule"/>
</dbReference>
<dbReference type="HAMAP" id="MF_01141">
    <property type="entry name" value="LrgA"/>
    <property type="match status" value="1"/>
</dbReference>
<dbReference type="InterPro" id="IPR023736">
    <property type="entry name" value="Antiholin-like_LrgA"/>
</dbReference>
<dbReference type="InterPro" id="IPR005538">
    <property type="entry name" value="LrgA/CidA"/>
</dbReference>
<dbReference type="NCBIfam" id="NF003155">
    <property type="entry name" value="PRK04125.1"/>
    <property type="match status" value="1"/>
</dbReference>
<dbReference type="PANTHER" id="PTHR33931:SF4">
    <property type="entry name" value="ANTIHOLIN-LIKE PROTEIN LRGA"/>
    <property type="match status" value="1"/>
</dbReference>
<dbReference type="PANTHER" id="PTHR33931">
    <property type="entry name" value="HOLIN-LIKE PROTEIN CIDA-RELATED"/>
    <property type="match status" value="1"/>
</dbReference>
<dbReference type="Pfam" id="PF03788">
    <property type="entry name" value="LrgA"/>
    <property type="match status" value="1"/>
</dbReference>
<evidence type="ECO:0000255" key="1">
    <source>
        <dbReference type="HAMAP-Rule" id="MF_01141"/>
    </source>
</evidence>